<accession>Q0HE88</accession>
<reference key="1">
    <citation type="submission" date="2006-08" db="EMBL/GenBank/DDBJ databases">
        <title>Complete sequence of Shewanella sp. MR-4.</title>
        <authorList>
            <consortium name="US DOE Joint Genome Institute"/>
            <person name="Copeland A."/>
            <person name="Lucas S."/>
            <person name="Lapidus A."/>
            <person name="Barry K."/>
            <person name="Detter J.C."/>
            <person name="Glavina del Rio T."/>
            <person name="Hammon N."/>
            <person name="Israni S."/>
            <person name="Dalin E."/>
            <person name="Tice H."/>
            <person name="Pitluck S."/>
            <person name="Kiss H."/>
            <person name="Brettin T."/>
            <person name="Bruce D."/>
            <person name="Han C."/>
            <person name="Tapia R."/>
            <person name="Gilna P."/>
            <person name="Schmutz J."/>
            <person name="Larimer F."/>
            <person name="Land M."/>
            <person name="Hauser L."/>
            <person name="Kyrpides N."/>
            <person name="Mikhailova N."/>
            <person name="Nealson K."/>
            <person name="Konstantinidis K."/>
            <person name="Klappenbach J."/>
            <person name="Tiedje J."/>
            <person name="Richardson P."/>
        </authorList>
    </citation>
    <scope>NUCLEOTIDE SEQUENCE [LARGE SCALE GENOMIC DNA]</scope>
    <source>
        <strain>MR-4</strain>
    </source>
</reference>
<sequence>MIFQRTVQKMVKATGVGLHSGNKVTLSIMPAPVNTGIVLVRTDMNPAVAIPAKAEQVRETTMCTALVNDEGIRISTIEHLFAALAGLGIDNAVIEVDAPEIPIMDGSASPFVFLLQSAGIKEQAAPKKYLKIKRPVRVEDGDKWAELKPFKGFRVNFKIDFAHPEIARSQQHVVMDFSTSAFVKDISRARTFGFMRDIEYLRANNLALGGSMENAVVLDEYRVLNPDGLRYEDEFVKHKILDAFGDLYVAGHAILGEFTAYKTGHALNNQLVRALLAQQDAWELVSFEKEADVPVSFTVPGGAVYA</sequence>
<keyword id="KW-0378">Hydrolase</keyword>
<keyword id="KW-0441">Lipid A biosynthesis</keyword>
<keyword id="KW-0444">Lipid biosynthesis</keyword>
<keyword id="KW-0443">Lipid metabolism</keyword>
<keyword id="KW-0479">Metal-binding</keyword>
<keyword id="KW-0862">Zinc</keyword>
<name>LPXC_SHESM</name>
<feature type="chain" id="PRO_1000013233" description="UDP-3-O-acyl-N-acetylglucosamine deacetylase">
    <location>
        <begin position="1"/>
        <end position="306"/>
    </location>
</feature>
<feature type="active site" description="Proton donor" evidence="1">
    <location>
        <position position="265"/>
    </location>
</feature>
<feature type="binding site" evidence="1">
    <location>
        <position position="79"/>
    </location>
    <ligand>
        <name>Zn(2+)</name>
        <dbReference type="ChEBI" id="CHEBI:29105"/>
    </ligand>
</feature>
<feature type="binding site" evidence="1">
    <location>
        <position position="238"/>
    </location>
    <ligand>
        <name>Zn(2+)</name>
        <dbReference type="ChEBI" id="CHEBI:29105"/>
    </ligand>
</feature>
<feature type="binding site" evidence="1">
    <location>
        <position position="242"/>
    </location>
    <ligand>
        <name>Zn(2+)</name>
        <dbReference type="ChEBI" id="CHEBI:29105"/>
    </ligand>
</feature>
<comment type="function">
    <text evidence="1">Catalyzes the hydrolysis of UDP-3-O-myristoyl-N-acetylglucosamine to form UDP-3-O-myristoylglucosamine and acetate, the committed step in lipid A biosynthesis.</text>
</comment>
<comment type="catalytic activity">
    <reaction evidence="1">
        <text>a UDP-3-O-[(3R)-3-hydroxyacyl]-N-acetyl-alpha-D-glucosamine + H2O = a UDP-3-O-[(3R)-3-hydroxyacyl]-alpha-D-glucosamine + acetate</text>
        <dbReference type="Rhea" id="RHEA:67816"/>
        <dbReference type="ChEBI" id="CHEBI:15377"/>
        <dbReference type="ChEBI" id="CHEBI:30089"/>
        <dbReference type="ChEBI" id="CHEBI:137740"/>
        <dbReference type="ChEBI" id="CHEBI:173225"/>
        <dbReference type="EC" id="3.5.1.108"/>
    </reaction>
</comment>
<comment type="cofactor">
    <cofactor evidence="1">
        <name>Zn(2+)</name>
        <dbReference type="ChEBI" id="CHEBI:29105"/>
    </cofactor>
</comment>
<comment type="pathway">
    <text evidence="1">Glycolipid biosynthesis; lipid IV(A) biosynthesis; lipid IV(A) from (3R)-3-hydroxytetradecanoyl-[acyl-carrier-protein] and UDP-N-acetyl-alpha-D-glucosamine: step 2/6.</text>
</comment>
<comment type="similarity">
    <text evidence="1">Belongs to the LpxC family.</text>
</comment>
<protein>
    <recommendedName>
        <fullName evidence="1">UDP-3-O-acyl-N-acetylglucosamine deacetylase</fullName>
        <shortName evidence="1">UDP-3-O-acyl-GlcNAc deacetylase</shortName>
        <ecNumber evidence="1">3.5.1.108</ecNumber>
    </recommendedName>
    <alternativeName>
        <fullName evidence="1">UDP-3-O-[R-3-hydroxymyristoyl]-N-acetylglucosamine deacetylase</fullName>
    </alternativeName>
</protein>
<organism>
    <name type="scientific">Shewanella sp. (strain MR-4)</name>
    <dbReference type="NCBI Taxonomy" id="60480"/>
    <lineage>
        <taxon>Bacteria</taxon>
        <taxon>Pseudomonadati</taxon>
        <taxon>Pseudomonadota</taxon>
        <taxon>Gammaproteobacteria</taxon>
        <taxon>Alteromonadales</taxon>
        <taxon>Shewanellaceae</taxon>
        <taxon>Shewanella</taxon>
    </lineage>
</organism>
<proteinExistence type="inferred from homology"/>
<gene>
    <name evidence="1" type="primary">lpxC</name>
    <name type="ordered locus">Shewmr4_3565</name>
</gene>
<evidence type="ECO:0000255" key="1">
    <source>
        <dbReference type="HAMAP-Rule" id="MF_00388"/>
    </source>
</evidence>
<dbReference type="EC" id="3.5.1.108" evidence="1"/>
<dbReference type="EMBL" id="CP000446">
    <property type="protein sequence ID" value="ABI40629.1"/>
    <property type="molecule type" value="Genomic_DNA"/>
</dbReference>
<dbReference type="RefSeq" id="WP_011624293.1">
    <property type="nucleotide sequence ID" value="NC_008321.1"/>
</dbReference>
<dbReference type="SMR" id="Q0HE88"/>
<dbReference type="GeneID" id="94729669"/>
<dbReference type="KEGG" id="she:Shewmr4_3565"/>
<dbReference type="HOGENOM" id="CLU_046528_1_0_6"/>
<dbReference type="UniPathway" id="UPA00359">
    <property type="reaction ID" value="UER00478"/>
</dbReference>
<dbReference type="GO" id="GO:0016020">
    <property type="term" value="C:membrane"/>
    <property type="evidence" value="ECO:0007669"/>
    <property type="project" value="GOC"/>
</dbReference>
<dbReference type="GO" id="GO:0046872">
    <property type="term" value="F:metal ion binding"/>
    <property type="evidence" value="ECO:0007669"/>
    <property type="project" value="UniProtKB-KW"/>
</dbReference>
<dbReference type="GO" id="GO:0103117">
    <property type="term" value="F:UDP-3-O-acyl-N-acetylglucosamine deacetylase activity"/>
    <property type="evidence" value="ECO:0007669"/>
    <property type="project" value="UniProtKB-UniRule"/>
</dbReference>
<dbReference type="GO" id="GO:0009245">
    <property type="term" value="P:lipid A biosynthetic process"/>
    <property type="evidence" value="ECO:0007669"/>
    <property type="project" value="UniProtKB-UniRule"/>
</dbReference>
<dbReference type="Gene3D" id="3.30.230.20">
    <property type="entry name" value="lpxc deacetylase, domain 1"/>
    <property type="match status" value="1"/>
</dbReference>
<dbReference type="Gene3D" id="3.30.1700.10">
    <property type="entry name" value="lpxc deacetylase, domain 2"/>
    <property type="match status" value="1"/>
</dbReference>
<dbReference type="HAMAP" id="MF_00388">
    <property type="entry name" value="LpxC"/>
    <property type="match status" value="1"/>
</dbReference>
<dbReference type="InterPro" id="IPR020568">
    <property type="entry name" value="Ribosomal_Su5_D2-typ_SF"/>
</dbReference>
<dbReference type="InterPro" id="IPR004463">
    <property type="entry name" value="UDP-acyl_GlcNac_deAcase"/>
</dbReference>
<dbReference type="InterPro" id="IPR011334">
    <property type="entry name" value="UDP-acyl_GlcNac_deAcase_C"/>
</dbReference>
<dbReference type="InterPro" id="IPR015870">
    <property type="entry name" value="UDP-acyl_N-AcGlcN_deAcase_N"/>
</dbReference>
<dbReference type="NCBIfam" id="TIGR00325">
    <property type="entry name" value="lpxC"/>
    <property type="match status" value="1"/>
</dbReference>
<dbReference type="PANTHER" id="PTHR33694">
    <property type="entry name" value="UDP-3-O-ACYL-N-ACETYLGLUCOSAMINE DEACETYLASE 1, MITOCHONDRIAL-RELATED"/>
    <property type="match status" value="1"/>
</dbReference>
<dbReference type="PANTHER" id="PTHR33694:SF1">
    <property type="entry name" value="UDP-3-O-ACYL-N-ACETYLGLUCOSAMINE DEACETYLASE 1, MITOCHONDRIAL-RELATED"/>
    <property type="match status" value="1"/>
</dbReference>
<dbReference type="Pfam" id="PF03331">
    <property type="entry name" value="LpxC"/>
    <property type="match status" value="1"/>
</dbReference>
<dbReference type="SUPFAM" id="SSF54211">
    <property type="entry name" value="Ribosomal protein S5 domain 2-like"/>
    <property type="match status" value="2"/>
</dbReference>